<sequence>MKENRKIIHIDMDAFYASIEQRDNPKYKGKPLIVGGDPNRRGVVATCSYEARKYGIHSAMPSLTAYKLCPKAIFIRPRMEVYKKVSRQVMNILNEYSNLVEPLSLDEAFVDVSKSKRCKGSATLIALEIKERIFKEVGLTASAGVSFNKFLAKMASDFRKPDGITVITEENSKDFIRKLPIGKFFGVGRVTKNKLNNIGVFKGEDLLGFSEKELIGILGDRGKILYEFARGIDNRQVNPYRIRKSIGKEITLREDIEDIEEMIEILDKIAERVSESLCLLNKKGKTVTLKVKFNDFKHITRSITLEHFLKEKKEIMECVKDLISIVDFKNKKVRLLGITISSLEENIIIEEREQLSFDV</sequence>
<accession>Q0SSQ2</accession>
<proteinExistence type="inferred from homology"/>
<name>DPO4_CLOPS</name>
<protein>
    <recommendedName>
        <fullName evidence="1">DNA polymerase IV</fullName>
        <shortName evidence="1">Pol IV</shortName>
        <ecNumber evidence="1">2.7.7.7</ecNumber>
    </recommendedName>
</protein>
<keyword id="KW-0963">Cytoplasm</keyword>
<keyword id="KW-0227">DNA damage</keyword>
<keyword id="KW-0234">DNA repair</keyword>
<keyword id="KW-0235">DNA replication</keyword>
<keyword id="KW-0238">DNA-binding</keyword>
<keyword id="KW-0239">DNA-directed DNA polymerase</keyword>
<keyword id="KW-0460">Magnesium</keyword>
<keyword id="KW-0479">Metal-binding</keyword>
<keyword id="KW-0515">Mutator protein</keyword>
<keyword id="KW-0548">Nucleotidyltransferase</keyword>
<keyword id="KW-0808">Transferase</keyword>
<organism>
    <name type="scientific">Clostridium perfringens (strain SM101 / Type A)</name>
    <dbReference type="NCBI Taxonomy" id="289380"/>
    <lineage>
        <taxon>Bacteria</taxon>
        <taxon>Bacillati</taxon>
        <taxon>Bacillota</taxon>
        <taxon>Clostridia</taxon>
        <taxon>Eubacteriales</taxon>
        <taxon>Clostridiaceae</taxon>
        <taxon>Clostridium</taxon>
    </lineage>
</organism>
<evidence type="ECO:0000255" key="1">
    <source>
        <dbReference type="HAMAP-Rule" id="MF_01113"/>
    </source>
</evidence>
<feature type="chain" id="PRO_1000084884" description="DNA polymerase IV">
    <location>
        <begin position="1"/>
        <end position="359"/>
    </location>
</feature>
<feature type="domain" description="UmuC" evidence="1">
    <location>
        <begin position="7"/>
        <end position="188"/>
    </location>
</feature>
<feature type="active site" evidence="1">
    <location>
        <position position="107"/>
    </location>
</feature>
<feature type="binding site" evidence="1">
    <location>
        <position position="11"/>
    </location>
    <ligand>
        <name>Mg(2+)</name>
        <dbReference type="ChEBI" id="CHEBI:18420"/>
    </ligand>
</feature>
<feature type="binding site" evidence="1">
    <location>
        <position position="106"/>
    </location>
    <ligand>
        <name>Mg(2+)</name>
        <dbReference type="ChEBI" id="CHEBI:18420"/>
    </ligand>
</feature>
<feature type="site" description="Substrate discrimination" evidence="1">
    <location>
        <position position="16"/>
    </location>
</feature>
<reference key="1">
    <citation type="journal article" date="2006" name="Genome Res.">
        <title>Skewed genomic variability in strains of the toxigenic bacterial pathogen, Clostridium perfringens.</title>
        <authorList>
            <person name="Myers G.S.A."/>
            <person name="Rasko D.A."/>
            <person name="Cheung J.K."/>
            <person name="Ravel J."/>
            <person name="Seshadri R."/>
            <person name="DeBoy R.T."/>
            <person name="Ren Q."/>
            <person name="Varga J."/>
            <person name="Awad M.M."/>
            <person name="Brinkac L.M."/>
            <person name="Daugherty S.C."/>
            <person name="Haft D.H."/>
            <person name="Dodson R.J."/>
            <person name="Madupu R."/>
            <person name="Nelson W.C."/>
            <person name="Rosovitz M.J."/>
            <person name="Sullivan S.A."/>
            <person name="Khouri H."/>
            <person name="Dimitrov G.I."/>
            <person name="Watkins K.L."/>
            <person name="Mulligan S."/>
            <person name="Benton J."/>
            <person name="Radune D."/>
            <person name="Fisher D.J."/>
            <person name="Atkins H.S."/>
            <person name="Hiscox T."/>
            <person name="Jost B.H."/>
            <person name="Billington S.J."/>
            <person name="Songer J.G."/>
            <person name="McClane B.A."/>
            <person name="Titball R.W."/>
            <person name="Rood J.I."/>
            <person name="Melville S.B."/>
            <person name="Paulsen I.T."/>
        </authorList>
    </citation>
    <scope>NUCLEOTIDE SEQUENCE [LARGE SCALE GENOMIC DNA]</scope>
    <source>
        <strain>SM101 / Type A</strain>
    </source>
</reference>
<dbReference type="EC" id="2.7.7.7" evidence="1"/>
<dbReference type="EMBL" id="CP000312">
    <property type="protein sequence ID" value="ABG87577.1"/>
    <property type="molecule type" value="Genomic_DNA"/>
</dbReference>
<dbReference type="RefSeq" id="WP_011592487.1">
    <property type="nucleotide sequence ID" value="NC_008262.1"/>
</dbReference>
<dbReference type="SMR" id="Q0SSQ2"/>
<dbReference type="KEGG" id="cpr:CPR_1538"/>
<dbReference type="Proteomes" id="UP000001824">
    <property type="component" value="Chromosome"/>
</dbReference>
<dbReference type="GO" id="GO:0005829">
    <property type="term" value="C:cytosol"/>
    <property type="evidence" value="ECO:0007669"/>
    <property type="project" value="TreeGrafter"/>
</dbReference>
<dbReference type="GO" id="GO:0003684">
    <property type="term" value="F:damaged DNA binding"/>
    <property type="evidence" value="ECO:0007669"/>
    <property type="project" value="InterPro"/>
</dbReference>
<dbReference type="GO" id="GO:0003887">
    <property type="term" value="F:DNA-directed DNA polymerase activity"/>
    <property type="evidence" value="ECO:0007669"/>
    <property type="project" value="UniProtKB-UniRule"/>
</dbReference>
<dbReference type="GO" id="GO:0000287">
    <property type="term" value="F:magnesium ion binding"/>
    <property type="evidence" value="ECO:0007669"/>
    <property type="project" value="UniProtKB-UniRule"/>
</dbReference>
<dbReference type="GO" id="GO:0006261">
    <property type="term" value="P:DNA-templated DNA replication"/>
    <property type="evidence" value="ECO:0007669"/>
    <property type="project" value="UniProtKB-UniRule"/>
</dbReference>
<dbReference type="GO" id="GO:0042276">
    <property type="term" value="P:error-prone translesion synthesis"/>
    <property type="evidence" value="ECO:0007669"/>
    <property type="project" value="TreeGrafter"/>
</dbReference>
<dbReference type="GO" id="GO:0009432">
    <property type="term" value="P:SOS response"/>
    <property type="evidence" value="ECO:0007669"/>
    <property type="project" value="TreeGrafter"/>
</dbReference>
<dbReference type="CDD" id="cd03586">
    <property type="entry name" value="PolY_Pol_IV_kappa"/>
    <property type="match status" value="1"/>
</dbReference>
<dbReference type="FunFam" id="3.30.1490.100:FF:000004">
    <property type="entry name" value="DNA polymerase IV"/>
    <property type="match status" value="1"/>
</dbReference>
<dbReference type="FunFam" id="3.40.1170.60:FF:000001">
    <property type="entry name" value="DNA polymerase IV"/>
    <property type="match status" value="1"/>
</dbReference>
<dbReference type="Gene3D" id="3.30.70.270">
    <property type="match status" value="1"/>
</dbReference>
<dbReference type="Gene3D" id="3.40.1170.60">
    <property type="match status" value="1"/>
</dbReference>
<dbReference type="Gene3D" id="1.10.150.20">
    <property type="entry name" value="5' to 3' exonuclease, C-terminal subdomain"/>
    <property type="match status" value="1"/>
</dbReference>
<dbReference type="Gene3D" id="3.30.1490.100">
    <property type="entry name" value="DNA polymerase, Y-family, little finger domain"/>
    <property type="match status" value="1"/>
</dbReference>
<dbReference type="HAMAP" id="MF_01113">
    <property type="entry name" value="DNApol_IV"/>
    <property type="match status" value="1"/>
</dbReference>
<dbReference type="InterPro" id="IPR043502">
    <property type="entry name" value="DNA/RNA_pol_sf"/>
</dbReference>
<dbReference type="InterPro" id="IPR036775">
    <property type="entry name" value="DNA_pol_Y-fam_lit_finger_sf"/>
</dbReference>
<dbReference type="InterPro" id="IPR017961">
    <property type="entry name" value="DNA_pol_Y-fam_little_finger"/>
</dbReference>
<dbReference type="InterPro" id="IPR050116">
    <property type="entry name" value="DNA_polymerase-Y"/>
</dbReference>
<dbReference type="InterPro" id="IPR022880">
    <property type="entry name" value="DNApol_IV"/>
</dbReference>
<dbReference type="InterPro" id="IPR043128">
    <property type="entry name" value="Rev_trsase/Diguanyl_cyclase"/>
</dbReference>
<dbReference type="InterPro" id="IPR001126">
    <property type="entry name" value="UmuC"/>
</dbReference>
<dbReference type="NCBIfam" id="NF002677">
    <property type="entry name" value="PRK02406.1"/>
    <property type="match status" value="1"/>
</dbReference>
<dbReference type="NCBIfam" id="NF010731">
    <property type="entry name" value="PRK14133.1"/>
    <property type="match status" value="1"/>
</dbReference>
<dbReference type="PANTHER" id="PTHR11076:SF33">
    <property type="entry name" value="DNA POLYMERASE KAPPA"/>
    <property type="match status" value="1"/>
</dbReference>
<dbReference type="PANTHER" id="PTHR11076">
    <property type="entry name" value="DNA REPAIR POLYMERASE UMUC / TRANSFERASE FAMILY MEMBER"/>
    <property type="match status" value="1"/>
</dbReference>
<dbReference type="Pfam" id="PF00817">
    <property type="entry name" value="IMS"/>
    <property type="match status" value="1"/>
</dbReference>
<dbReference type="Pfam" id="PF11799">
    <property type="entry name" value="IMS_C"/>
    <property type="match status" value="1"/>
</dbReference>
<dbReference type="SUPFAM" id="SSF56672">
    <property type="entry name" value="DNA/RNA polymerases"/>
    <property type="match status" value="1"/>
</dbReference>
<dbReference type="SUPFAM" id="SSF100879">
    <property type="entry name" value="Lesion bypass DNA polymerase (Y-family), little finger domain"/>
    <property type="match status" value="1"/>
</dbReference>
<dbReference type="PROSITE" id="PS50173">
    <property type="entry name" value="UMUC"/>
    <property type="match status" value="1"/>
</dbReference>
<gene>
    <name evidence="1" type="primary">dinB</name>
    <name type="ordered locus">CPR_1538</name>
</gene>
<comment type="function">
    <text evidence="1">Poorly processive, error-prone DNA polymerase involved in untargeted mutagenesis. Copies undamaged DNA at stalled replication forks, which arise in vivo from mismatched or misaligned primer ends. These misaligned primers can be extended by PolIV. Exhibits no 3'-5' exonuclease (proofreading) activity. May be involved in translesional synthesis, in conjunction with the beta clamp from PolIII.</text>
</comment>
<comment type="catalytic activity">
    <reaction evidence="1">
        <text>DNA(n) + a 2'-deoxyribonucleoside 5'-triphosphate = DNA(n+1) + diphosphate</text>
        <dbReference type="Rhea" id="RHEA:22508"/>
        <dbReference type="Rhea" id="RHEA-COMP:17339"/>
        <dbReference type="Rhea" id="RHEA-COMP:17340"/>
        <dbReference type="ChEBI" id="CHEBI:33019"/>
        <dbReference type="ChEBI" id="CHEBI:61560"/>
        <dbReference type="ChEBI" id="CHEBI:173112"/>
        <dbReference type="EC" id="2.7.7.7"/>
    </reaction>
</comment>
<comment type="cofactor">
    <cofactor evidence="1">
        <name>Mg(2+)</name>
        <dbReference type="ChEBI" id="CHEBI:18420"/>
    </cofactor>
    <text evidence="1">Binds 2 magnesium ions per subunit.</text>
</comment>
<comment type="subunit">
    <text evidence="1">Monomer.</text>
</comment>
<comment type="subcellular location">
    <subcellularLocation>
        <location evidence="1">Cytoplasm</location>
    </subcellularLocation>
</comment>
<comment type="similarity">
    <text evidence="1">Belongs to the DNA polymerase type-Y family.</text>
</comment>